<feature type="chain" id="PRO_1000001105" description="Octanoyltransferase">
    <location>
        <begin position="1"/>
        <end position="212"/>
    </location>
</feature>
<feature type="domain" description="BPL/LPL catalytic" evidence="2">
    <location>
        <begin position="31"/>
        <end position="209"/>
    </location>
</feature>
<feature type="active site" description="Acyl-thioester intermediate" evidence="1">
    <location>
        <position position="169"/>
    </location>
</feature>
<feature type="binding site" evidence="1">
    <location>
        <begin position="70"/>
        <end position="77"/>
    </location>
    <ligand>
        <name>substrate</name>
    </ligand>
</feature>
<feature type="binding site" evidence="1">
    <location>
        <begin position="138"/>
        <end position="140"/>
    </location>
    <ligand>
        <name>substrate</name>
    </ligand>
</feature>
<feature type="binding site" evidence="1">
    <location>
        <begin position="151"/>
        <end position="153"/>
    </location>
    <ligand>
        <name>substrate</name>
    </ligand>
</feature>
<feature type="site" description="Lowers pKa of active site Cys" evidence="1">
    <location>
        <position position="135"/>
    </location>
</feature>
<dbReference type="EC" id="2.3.1.181" evidence="1"/>
<dbReference type="EMBL" id="CP000672">
    <property type="protein sequence ID" value="ABQ99554.1"/>
    <property type="molecule type" value="Genomic_DNA"/>
</dbReference>
<dbReference type="SMR" id="A5UFJ9"/>
<dbReference type="KEGG" id="hiq:CGSHiGG_02620"/>
<dbReference type="HOGENOM" id="CLU_035168_3_1_6"/>
<dbReference type="UniPathway" id="UPA00538">
    <property type="reaction ID" value="UER00592"/>
</dbReference>
<dbReference type="Proteomes" id="UP000001990">
    <property type="component" value="Chromosome"/>
</dbReference>
<dbReference type="GO" id="GO:0005737">
    <property type="term" value="C:cytoplasm"/>
    <property type="evidence" value="ECO:0007669"/>
    <property type="project" value="UniProtKB-SubCell"/>
</dbReference>
<dbReference type="GO" id="GO:0033819">
    <property type="term" value="F:lipoyl(octanoyl) transferase activity"/>
    <property type="evidence" value="ECO:0007669"/>
    <property type="project" value="UniProtKB-EC"/>
</dbReference>
<dbReference type="GO" id="GO:0036211">
    <property type="term" value="P:protein modification process"/>
    <property type="evidence" value="ECO:0007669"/>
    <property type="project" value="InterPro"/>
</dbReference>
<dbReference type="CDD" id="cd16444">
    <property type="entry name" value="LipB"/>
    <property type="match status" value="1"/>
</dbReference>
<dbReference type="FunFam" id="3.30.930.10:FF:000020">
    <property type="entry name" value="Octanoyltransferase"/>
    <property type="match status" value="1"/>
</dbReference>
<dbReference type="Gene3D" id="3.30.930.10">
    <property type="entry name" value="Bira Bifunctional Protein, Domain 2"/>
    <property type="match status" value="1"/>
</dbReference>
<dbReference type="HAMAP" id="MF_00013">
    <property type="entry name" value="LipB"/>
    <property type="match status" value="1"/>
</dbReference>
<dbReference type="InterPro" id="IPR045864">
    <property type="entry name" value="aa-tRNA-synth_II/BPL/LPL"/>
</dbReference>
<dbReference type="InterPro" id="IPR004143">
    <property type="entry name" value="BPL_LPL_catalytic"/>
</dbReference>
<dbReference type="InterPro" id="IPR000544">
    <property type="entry name" value="Octanoyltransferase"/>
</dbReference>
<dbReference type="InterPro" id="IPR020605">
    <property type="entry name" value="Octanoyltransferase_CS"/>
</dbReference>
<dbReference type="NCBIfam" id="TIGR00214">
    <property type="entry name" value="lipB"/>
    <property type="match status" value="1"/>
</dbReference>
<dbReference type="NCBIfam" id="NF010922">
    <property type="entry name" value="PRK14342.1"/>
    <property type="match status" value="1"/>
</dbReference>
<dbReference type="PANTHER" id="PTHR10993:SF7">
    <property type="entry name" value="LIPOYLTRANSFERASE 2, MITOCHONDRIAL-RELATED"/>
    <property type="match status" value="1"/>
</dbReference>
<dbReference type="PANTHER" id="PTHR10993">
    <property type="entry name" value="OCTANOYLTRANSFERASE"/>
    <property type="match status" value="1"/>
</dbReference>
<dbReference type="Pfam" id="PF21948">
    <property type="entry name" value="LplA-B_cat"/>
    <property type="match status" value="1"/>
</dbReference>
<dbReference type="PIRSF" id="PIRSF016262">
    <property type="entry name" value="LPLase"/>
    <property type="match status" value="1"/>
</dbReference>
<dbReference type="SUPFAM" id="SSF55681">
    <property type="entry name" value="Class II aaRS and biotin synthetases"/>
    <property type="match status" value="1"/>
</dbReference>
<dbReference type="PROSITE" id="PS51733">
    <property type="entry name" value="BPL_LPL_CATALYTIC"/>
    <property type="match status" value="1"/>
</dbReference>
<dbReference type="PROSITE" id="PS01313">
    <property type="entry name" value="LIPB"/>
    <property type="match status" value="1"/>
</dbReference>
<gene>
    <name evidence="1" type="primary">lipB</name>
    <name type="ordered locus">CGSHiGG_02620</name>
</gene>
<protein>
    <recommendedName>
        <fullName evidence="1">Octanoyltransferase</fullName>
        <ecNumber evidence="1">2.3.1.181</ecNumber>
    </recommendedName>
    <alternativeName>
        <fullName evidence="1">Lipoate-protein ligase B</fullName>
    </alternativeName>
    <alternativeName>
        <fullName evidence="1">Lipoyl/octanoyl transferase</fullName>
    </alternativeName>
    <alternativeName>
        <fullName evidence="1">Octanoyl-[acyl-carrier-protein]-protein N-octanoyltransferase</fullName>
    </alternativeName>
</protein>
<proteinExistence type="inferred from homology"/>
<keyword id="KW-0012">Acyltransferase</keyword>
<keyword id="KW-0963">Cytoplasm</keyword>
<keyword id="KW-0808">Transferase</keyword>
<sequence>MNNSLIVRQLGLQDYQEIWHKMQDFTDTRNAETQDEIWLVQHYPVFTQGQAGKPEHLLQRSEIPVVQSDRGGQITYHAPGQQVMYVLIDIKRHKNLNVRQLVTALEQTVVKTLAEYGIESYPKPDAPGVYVDGKKICSLGLRIRRGCSFHGLALNINMDLNPFHYINPCGYAGLEMCQLADFVNQDEADWDNVSAKLIKHFADLLGYNITTL</sequence>
<organism>
    <name type="scientific">Haemophilus influenzae (strain PittGG)</name>
    <dbReference type="NCBI Taxonomy" id="374931"/>
    <lineage>
        <taxon>Bacteria</taxon>
        <taxon>Pseudomonadati</taxon>
        <taxon>Pseudomonadota</taxon>
        <taxon>Gammaproteobacteria</taxon>
        <taxon>Pasteurellales</taxon>
        <taxon>Pasteurellaceae</taxon>
        <taxon>Haemophilus</taxon>
    </lineage>
</organism>
<name>LIPB_HAEIG</name>
<accession>A5UFJ9</accession>
<evidence type="ECO:0000255" key="1">
    <source>
        <dbReference type="HAMAP-Rule" id="MF_00013"/>
    </source>
</evidence>
<evidence type="ECO:0000255" key="2">
    <source>
        <dbReference type="PROSITE-ProRule" id="PRU01067"/>
    </source>
</evidence>
<comment type="function">
    <text evidence="1">Catalyzes the transfer of endogenously produced octanoic acid from octanoyl-acyl-carrier-protein onto the lipoyl domains of lipoate-dependent enzymes. Lipoyl-ACP can also act as a substrate although octanoyl-ACP is likely to be the physiological substrate.</text>
</comment>
<comment type="catalytic activity">
    <reaction evidence="1">
        <text>octanoyl-[ACP] + L-lysyl-[protein] = N(6)-octanoyl-L-lysyl-[protein] + holo-[ACP] + H(+)</text>
        <dbReference type="Rhea" id="RHEA:17665"/>
        <dbReference type="Rhea" id="RHEA-COMP:9636"/>
        <dbReference type="Rhea" id="RHEA-COMP:9685"/>
        <dbReference type="Rhea" id="RHEA-COMP:9752"/>
        <dbReference type="Rhea" id="RHEA-COMP:9928"/>
        <dbReference type="ChEBI" id="CHEBI:15378"/>
        <dbReference type="ChEBI" id="CHEBI:29969"/>
        <dbReference type="ChEBI" id="CHEBI:64479"/>
        <dbReference type="ChEBI" id="CHEBI:78463"/>
        <dbReference type="ChEBI" id="CHEBI:78809"/>
        <dbReference type="EC" id="2.3.1.181"/>
    </reaction>
</comment>
<comment type="pathway">
    <text evidence="1">Protein modification; protein lipoylation via endogenous pathway; protein N(6)-(lipoyl)lysine from octanoyl-[acyl-carrier-protein]: step 1/2.</text>
</comment>
<comment type="subcellular location">
    <subcellularLocation>
        <location evidence="1">Cytoplasm</location>
    </subcellularLocation>
</comment>
<comment type="miscellaneous">
    <text evidence="1">In the reaction, the free carboxyl group of octanoic acid is attached via an amide linkage to the epsilon-amino group of a specific lysine residue of lipoyl domains of lipoate-dependent enzymes.</text>
</comment>
<comment type="similarity">
    <text evidence="1">Belongs to the LipB family.</text>
</comment>
<reference key="1">
    <citation type="journal article" date="2007" name="Genome Biol.">
        <title>Characterization and modeling of the Haemophilus influenzae core and supragenomes based on the complete genomic sequences of Rd and 12 clinical nontypeable strains.</title>
        <authorList>
            <person name="Hogg J.S."/>
            <person name="Hu F.Z."/>
            <person name="Janto B."/>
            <person name="Boissy R."/>
            <person name="Hayes J."/>
            <person name="Keefe R."/>
            <person name="Post J.C."/>
            <person name="Ehrlich G.D."/>
        </authorList>
    </citation>
    <scope>NUCLEOTIDE SEQUENCE [LARGE SCALE GENOMIC DNA]</scope>
    <source>
        <strain>PittGG</strain>
    </source>
</reference>